<accession>Q8K9K5</accession>
<name>FLGF_BUCAP</name>
<comment type="subunit">
    <text evidence="1">The basal body constitutes a major portion of the flagellar organelle and consists of five rings (E,L,P,S, and M) mounted on a central rod. The rod consists of about 26 subunits of FlgG in the distal portion, and FlgB, FlgC and FlgF are thought to build up the proximal portion of the rod with about 6 subunits each (By similarity).</text>
</comment>
<comment type="subcellular location">
    <subcellularLocation>
        <location evidence="1">Bacterial flagellum basal body</location>
    </subcellularLocation>
</comment>
<comment type="similarity">
    <text evidence="2">Belongs to the flagella basal body rod proteins family.</text>
</comment>
<evidence type="ECO:0000250" key="1"/>
<evidence type="ECO:0000305" key="2"/>
<dbReference type="EMBL" id="AE013218">
    <property type="protein sequence ID" value="AAM67883.1"/>
    <property type="molecule type" value="Genomic_DNA"/>
</dbReference>
<dbReference type="RefSeq" id="WP_011053850.1">
    <property type="nucleotide sequence ID" value="NC_004061.1"/>
</dbReference>
<dbReference type="SMR" id="Q8K9K5"/>
<dbReference type="STRING" id="198804.BUsg_329"/>
<dbReference type="GeneID" id="93003800"/>
<dbReference type="KEGG" id="bas:BUsg_329"/>
<dbReference type="eggNOG" id="COG4787">
    <property type="taxonomic scope" value="Bacteria"/>
</dbReference>
<dbReference type="HOGENOM" id="CLU_013687_1_0_6"/>
<dbReference type="Proteomes" id="UP000000416">
    <property type="component" value="Chromosome"/>
</dbReference>
<dbReference type="GO" id="GO:0009425">
    <property type="term" value="C:bacterial-type flagellum basal body"/>
    <property type="evidence" value="ECO:0007669"/>
    <property type="project" value="UniProtKB-SubCell"/>
</dbReference>
<dbReference type="GO" id="GO:0071978">
    <property type="term" value="P:bacterial-type flagellum-dependent swarming motility"/>
    <property type="evidence" value="ECO:0007669"/>
    <property type="project" value="TreeGrafter"/>
</dbReference>
<dbReference type="InterPro" id="IPR001444">
    <property type="entry name" value="Flag_bb_rod_N"/>
</dbReference>
<dbReference type="InterPro" id="IPR019776">
    <property type="entry name" value="Flagellar_basal_body_rod_CS"/>
</dbReference>
<dbReference type="InterPro" id="IPR020013">
    <property type="entry name" value="Flagellar_FlgE/F/G"/>
</dbReference>
<dbReference type="InterPro" id="IPR010930">
    <property type="entry name" value="Flg_bb/hook_C_dom"/>
</dbReference>
<dbReference type="InterPro" id="IPR037925">
    <property type="entry name" value="FlgE/F/G-like"/>
</dbReference>
<dbReference type="InterPro" id="IPR053967">
    <property type="entry name" value="LlgE_F_G-like_D1"/>
</dbReference>
<dbReference type="NCBIfam" id="TIGR03506">
    <property type="entry name" value="FlgEFG_subfam"/>
    <property type="match status" value="1"/>
</dbReference>
<dbReference type="NCBIfam" id="NF009280">
    <property type="entry name" value="PRK12640.1"/>
    <property type="match status" value="1"/>
</dbReference>
<dbReference type="NCBIfam" id="NF009281">
    <property type="entry name" value="PRK12641.1"/>
    <property type="match status" value="1"/>
</dbReference>
<dbReference type="PANTHER" id="PTHR30435:SF18">
    <property type="entry name" value="FLAGELLAR BASAL-BODY ROD PROTEIN FLGF"/>
    <property type="match status" value="1"/>
</dbReference>
<dbReference type="PANTHER" id="PTHR30435">
    <property type="entry name" value="FLAGELLAR PROTEIN"/>
    <property type="match status" value="1"/>
</dbReference>
<dbReference type="Pfam" id="PF00460">
    <property type="entry name" value="Flg_bb_rod"/>
    <property type="match status" value="1"/>
</dbReference>
<dbReference type="Pfam" id="PF06429">
    <property type="entry name" value="Flg_bbr_C"/>
    <property type="match status" value="1"/>
</dbReference>
<dbReference type="Pfam" id="PF22692">
    <property type="entry name" value="LlgE_F_G_D1"/>
    <property type="match status" value="1"/>
</dbReference>
<dbReference type="SUPFAM" id="SSF117143">
    <property type="entry name" value="Flagellar hook protein flgE"/>
    <property type="match status" value="1"/>
</dbReference>
<dbReference type="PROSITE" id="PS00588">
    <property type="entry name" value="FLAGELLA_BB_ROD"/>
    <property type="match status" value="1"/>
</dbReference>
<sequence length="249" mass="28570">MNKAIYESMNAAIKLLDKQAVIANNLANISTVGFKESFNLFIKDRNLQNLKKTYNQNVKEYYNFYPGTLIHTQRNLDLVIKNNGWLAIKDINGQEAYTKNGHIKINKEGKMTVQNYELIGNNGNIKIPNNVNLKISSNGIIKEIKKNKDSIIESTIGSLKLVRLQNDNLIQKENGLFYLKKDNLNKYKNILHDSSVRIQSEMLEASNVNPTKNMIDMISNARQFEMNMKIISMCDQNTEYANQLFNVNN</sequence>
<gene>
    <name type="primary">flgF</name>
    <name type="ordered locus">BUsg_329</name>
</gene>
<reference key="1">
    <citation type="journal article" date="2002" name="Science">
        <title>50 million years of genomic stasis in endosymbiotic bacteria.</title>
        <authorList>
            <person name="Tamas I."/>
            <person name="Klasson L."/>
            <person name="Canbaeck B."/>
            <person name="Naeslund A.K."/>
            <person name="Eriksson A.-S."/>
            <person name="Wernegreen J.J."/>
            <person name="Sandstroem J.P."/>
            <person name="Moran N.A."/>
            <person name="Andersson S.G.E."/>
        </authorList>
    </citation>
    <scope>NUCLEOTIDE SEQUENCE [LARGE SCALE GENOMIC DNA]</scope>
    <source>
        <strain>Sg</strain>
    </source>
</reference>
<keyword id="KW-0975">Bacterial flagellum</keyword>
<organism>
    <name type="scientific">Buchnera aphidicola subsp. Schizaphis graminum (strain Sg)</name>
    <dbReference type="NCBI Taxonomy" id="198804"/>
    <lineage>
        <taxon>Bacteria</taxon>
        <taxon>Pseudomonadati</taxon>
        <taxon>Pseudomonadota</taxon>
        <taxon>Gammaproteobacteria</taxon>
        <taxon>Enterobacterales</taxon>
        <taxon>Erwiniaceae</taxon>
        <taxon>Buchnera</taxon>
    </lineage>
</organism>
<protein>
    <recommendedName>
        <fullName>Flagellar basal-body rod protein FlgF</fullName>
    </recommendedName>
</protein>
<proteinExistence type="inferred from homology"/>
<feature type="chain" id="PRO_0000180835" description="Flagellar basal-body rod protein FlgF">
    <location>
        <begin position="1"/>
        <end position="249"/>
    </location>
</feature>